<evidence type="ECO:0000255" key="1">
    <source>
        <dbReference type="HAMAP-Rule" id="MF_00473"/>
    </source>
</evidence>
<sequence length="450" mass="50331">MSTHVTFDYSKALSFIGEHEITYLRDAVKVTHHAIHEKTGAGNDFLGWVDLPLQYDKEEFARIQKCAEKIKNDSDILLVVGIGGSYLGARAAIEMLNHSFYNTLSKEQRKTPQVLFVGQNISSTYMKDLMDVLEGKDFSINVISKSGTTTEPALAFRIFRKLLEEKYGKEEARKRIYATTDKARGALKTLADNEGYETFVIPDDVGGRFSVLTPVGLLPIAVSGLNIEEMMKGAAAGRDDFGTSELEENPAYQYAVVRNALYNKGKTIEMLVNYEPALQYFAEWWKQLFGESEGKDQKGIFPSSANFSTDLHSLGQYVQEGRRDLFETVLKVGKSTHELTIESEENDLDGLNYLAGETVDFVNTKAYEGTLLAHSDGGVPNLIVNIPELNEYTFGYLVYFFEKACAMSGYLLGVNPFDQPGVEAYKKNMFALLGKPGFEELKAELEERLK</sequence>
<proteinExistence type="inferred from homology"/>
<feature type="chain" id="PRO_0000180594" description="Glucose-6-phosphate isomerase">
    <location>
        <begin position="1"/>
        <end position="450"/>
    </location>
</feature>
<feature type="active site" description="Proton donor" evidence="1">
    <location>
        <position position="291"/>
    </location>
</feature>
<feature type="active site" evidence="1">
    <location>
        <position position="312"/>
    </location>
</feature>
<feature type="active site" evidence="1">
    <location>
        <position position="426"/>
    </location>
</feature>
<feature type="modified residue" description="Phosphothreonine" evidence="1">
    <location>
        <position position="39"/>
    </location>
</feature>
<keyword id="KW-0963">Cytoplasm</keyword>
<keyword id="KW-0312">Gluconeogenesis</keyword>
<keyword id="KW-0324">Glycolysis</keyword>
<keyword id="KW-0413">Isomerase</keyword>
<keyword id="KW-0597">Phosphoprotein</keyword>
<gene>
    <name evidence="1" type="primary">pgi</name>
    <name type="ordered locus">BT9727_4607</name>
</gene>
<accession>Q6HC08</accession>
<reference key="1">
    <citation type="journal article" date="2006" name="J. Bacteriol.">
        <title>Pathogenomic sequence analysis of Bacillus cereus and Bacillus thuringiensis isolates closely related to Bacillus anthracis.</title>
        <authorList>
            <person name="Han C.S."/>
            <person name="Xie G."/>
            <person name="Challacombe J.F."/>
            <person name="Altherr M.R."/>
            <person name="Bhotika S.S."/>
            <person name="Bruce D."/>
            <person name="Campbell C.S."/>
            <person name="Campbell M.L."/>
            <person name="Chen J."/>
            <person name="Chertkov O."/>
            <person name="Cleland C."/>
            <person name="Dimitrijevic M."/>
            <person name="Doggett N.A."/>
            <person name="Fawcett J.J."/>
            <person name="Glavina T."/>
            <person name="Goodwin L.A."/>
            <person name="Hill K.K."/>
            <person name="Hitchcock P."/>
            <person name="Jackson P.J."/>
            <person name="Keim P."/>
            <person name="Kewalramani A.R."/>
            <person name="Longmire J."/>
            <person name="Lucas S."/>
            <person name="Malfatti S."/>
            <person name="McMurry K."/>
            <person name="Meincke L.J."/>
            <person name="Misra M."/>
            <person name="Moseman B.L."/>
            <person name="Mundt M."/>
            <person name="Munk A.C."/>
            <person name="Okinaka R.T."/>
            <person name="Parson-Quintana B."/>
            <person name="Reilly L.P."/>
            <person name="Richardson P."/>
            <person name="Robinson D.L."/>
            <person name="Rubin E."/>
            <person name="Saunders E."/>
            <person name="Tapia R."/>
            <person name="Tesmer J.G."/>
            <person name="Thayer N."/>
            <person name="Thompson L.S."/>
            <person name="Tice H."/>
            <person name="Ticknor L.O."/>
            <person name="Wills P.L."/>
            <person name="Brettin T.S."/>
            <person name="Gilna P."/>
        </authorList>
    </citation>
    <scope>NUCLEOTIDE SEQUENCE [LARGE SCALE GENOMIC DNA]</scope>
    <source>
        <strain>97-27</strain>
    </source>
</reference>
<comment type="function">
    <text evidence="1">Catalyzes the reversible isomerization of glucose-6-phosphate to fructose-6-phosphate.</text>
</comment>
<comment type="catalytic activity">
    <reaction evidence="1">
        <text>alpha-D-glucose 6-phosphate = beta-D-fructose 6-phosphate</text>
        <dbReference type="Rhea" id="RHEA:11816"/>
        <dbReference type="ChEBI" id="CHEBI:57634"/>
        <dbReference type="ChEBI" id="CHEBI:58225"/>
        <dbReference type="EC" id="5.3.1.9"/>
    </reaction>
</comment>
<comment type="pathway">
    <text evidence="1">Carbohydrate biosynthesis; gluconeogenesis.</text>
</comment>
<comment type="pathway">
    <text evidence="1">Carbohydrate degradation; glycolysis; D-glyceraldehyde 3-phosphate and glycerone phosphate from D-glucose: step 2/4.</text>
</comment>
<comment type="subcellular location">
    <subcellularLocation>
        <location evidence="1">Cytoplasm</location>
    </subcellularLocation>
</comment>
<comment type="similarity">
    <text evidence="1">Belongs to the GPI family.</text>
</comment>
<protein>
    <recommendedName>
        <fullName evidence="1">Glucose-6-phosphate isomerase</fullName>
        <shortName evidence="1">GPI</shortName>
        <ecNumber evidence="1">5.3.1.9</ecNumber>
    </recommendedName>
    <alternativeName>
        <fullName evidence="1">Phosphoglucose isomerase</fullName>
        <shortName evidence="1">PGI</shortName>
    </alternativeName>
    <alternativeName>
        <fullName evidence="1">Phosphohexose isomerase</fullName>
        <shortName evidence="1">PHI</shortName>
    </alternativeName>
</protein>
<name>G6PI_BACHK</name>
<organism>
    <name type="scientific">Bacillus thuringiensis subsp. konkukian (strain 97-27)</name>
    <dbReference type="NCBI Taxonomy" id="281309"/>
    <lineage>
        <taxon>Bacteria</taxon>
        <taxon>Bacillati</taxon>
        <taxon>Bacillota</taxon>
        <taxon>Bacilli</taxon>
        <taxon>Bacillales</taxon>
        <taxon>Bacillaceae</taxon>
        <taxon>Bacillus</taxon>
        <taxon>Bacillus cereus group</taxon>
    </lineage>
</organism>
<dbReference type="EC" id="5.3.1.9" evidence="1"/>
<dbReference type="EMBL" id="AE017355">
    <property type="protein sequence ID" value="AAT63174.1"/>
    <property type="molecule type" value="Genomic_DNA"/>
</dbReference>
<dbReference type="RefSeq" id="WP_000103658.1">
    <property type="nucleotide sequence ID" value="NC_005957.1"/>
</dbReference>
<dbReference type="RefSeq" id="YP_038918.1">
    <property type="nucleotide sequence ID" value="NC_005957.1"/>
</dbReference>
<dbReference type="SMR" id="Q6HC08"/>
<dbReference type="KEGG" id="btk:BT9727_4607"/>
<dbReference type="PATRIC" id="fig|281309.8.peg.4906"/>
<dbReference type="HOGENOM" id="CLU_037303_0_1_9"/>
<dbReference type="UniPathway" id="UPA00109">
    <property type="reaction ID" value="UER00181"/>
</dbReference>
<dbReference type="UniPathway" id="UPA00138"/>
<dbReference type="Proteomes" id="UP000001301">
    <property type="component" value="Chromosome"/>
</dbReference>
<dbReference type="GO" id="GO:0005829">
    <property type="term" value="C:cytosol"/>
    <property type="evidence" value="ECO:0007669"/>
    <property type="project" value="TreeGrafter"/>
</dbReference>
<dbReference type="GO" id="GO:0097367">
    <property type="term" value="F:carbohydrate derivative binding"/>
    <property type="evidence" value="ECO:0007669"/>
    <property type="project" value="InterPro"/>
</dbReference>
<dbReference type="GO" id="GO:0004347">
    <property type="term" value="F:glucose-6-phosphate isomerase activity"/>
    <property type="evidence" value="ECO:0007669"/>
    <property type="project" value="UniProtKB-UniRule"/>
</dbReference>
<dbReference type="GO" id="GO:0048029">
    <property type="term" value="F:monosaccharide binding"/>
    <property type="evidence" value="ECO:0007669"/>
    <property type="project" value="TreeGrafter"/>
</dbReference>
<dbReference type="GO" id="GO:0006094">
    <property type="term" value="P:gluconeogenesis"/>
    <property type="evidence" value="ECO:0007669"/>
    <property type="project" value="UniProtKB-UniRule"/>
</dbReference>
<dbReference type="GO" id="GO:0051156">
    <property type="term" value="P:glucose 6-phosphate metabolic process"/>
    <property type="evidence" value="ECO:0007669"/>
    <property type="project" value="TreeGrafter"/>
</dbReference>
<dbReference type="GO" id="GO:0006096">
    <property type="term" value="P:glycolytic process"/>
    <property type="evidence" value="ECO:0007669"/>
    <property type="project" value="UniProtKB-UniRule"/>
</dbReference>
<dbReference type="CDD" id="cd05015">
    <property type="entry name" value="SIS_PGI_1"/>
    <property type="match status" value="1"/>
</dbReference>
<dbReference type="CDD" id="cd05016">
    <property type="entry name" value="SIS_PGI_2"/>
    <property type="match status" value="1"/>
</dbReference>
<dbReference type="FunFam" id="3.40.50.10490:FF:000015">
    <property type="entry name" value="Glucose-6-phosphate isomerase"/>
    <property type="match status" value="1"/>
</dbReference>
<dbReference type="FunFam" id="3.40.50.10490:FF:000016">
    <property type="entry name" value="Glucose-6-phosphate isomerase"/>
    <property type="match status" value="1"/>
</dbReference>
<dbReference type="FunFam" id="3.40.50.10490:FF:000020">
    <property type="entry name" value="Glucose-6-phosphate isomerase"/>
    <property type="match status" value="1"/>
</dbReference>
<dbReference type="Gene3D" id="3.40.50.10490">
    <property type="entry name" value="Glucose-6-phosphate isomerase like protein, domain 1"/>
    <property type="match status" value="3"/>
</dbReference>
<dbReference type="HAMAP" id="MF_00473">
    <property type="entry name" value="G6P_isomerase"/>
    <property type="match status" value="1"/>
</dbReference>
<dbReference type="InterPro" id="IPR001672">
    <property type="entry name" value="G6P_Isomerase"/>
</dbReference>
<dbReference type="InterPro" id="IPR018189">
    <property type="entry name" value="Phosphoglucose_isomerase_CS"/>
</dbReference>
<dbReference type="InterPro" id="IPR046348">
    <property type="entry name" value="SIS_dom_sf"/>
</dbReference>
<dbReference type="InterPro" id="IPR035476">
    <property type="entry name" value="SIS_PGI_1"/>
</dbReference>
<dbReference type="InterPro" id="IPR035482">
    <property type="entry name" value="SIS_PGI_2"/>
</dbReference>
<dbReference type="NCBIfam" id="NF010697">
    <property type="entry name" value="PRK14097.1"/>
    <property type="match status" value="1"/>
</dbReference>
<dbReference type="PANTHER" id="PTHR11469">
    <property type="entry name" value="GLUCOSE-6-PHOSPHATE ISOMERASE"/>
    <property type="match status" value="1"/>
</dbReference>
<dbReference type="PANTHER" id="PTHR11469:SF1">
    <property type="entry name" value="GLUCOSE-6-PHOSPHATE ISOMERASE"/>
    <property type="match status" value="1"/>
</dbReference>
<dbReference type="Pfam" id="PF00342">
    <property type="entry name" value="PGI"/>
    <property type="match status" value="1"/>
</dbReference>
<dbReference type="PRINTS" id="PR00662">
    <property type="entry name" value="G6PISOMERASE"/>
</dbReference>
<dbReference type="SUPFAM" id="SSF53697">
    <property type="entry name" value="SIS domain"/>
    <property type="match status" value="1"/>
</dbReference>
<dbReference type="PROSITE" id="PS00765">
    <property type="entry name" value="P_GLUCOSE_ISOMERASE_1"/>
    <property type="match status" value="1"/>
</dbReference>
<dbReference type="PROSITE" id="PS00174">
    <property type="entry name" value="P_GLUCOSE_ISOMERASE_2"/>
    <property type="match status" value="1"/>
</dbReference>
<dbReference type="PROSITE" id="PS51463">
    <property type="entry name" value="P_GLUCOSE_ISOMERASE_3"/>
    <property type="match status" value="1"/>
</dbReference>